<proteinExistence type="inferred from homology"/>
<dbReference type="EC" id="3.5.4.16" evidence="1"/>
<dbReference type="EMBL" id="CP000936">
    <property type="protein sequence ID" value="ACA35791.1"/>
    <property type="molecule type" value="Genomic_DNA"/>
</dbReference>
<dbReference type="RefSeq" id="WP_000380924.1">
    <property type="nucleotide sequence ID" value="NC_010380.1"/>
</dbReference>
<dbReference type="SMR" id="B1I918"/>
<dbReference type="GeneID" id="45652233"/>
<dbReference type="KEGG" id="spv:SPH_0408"/>
<dbReference type="HOGENOM" id="CLU_049768_3_3_9"/>
<dbReference type="UniPathway" id="UPA00848">
    <property type="reaction ID" value="UER00151"/>
</dbReference>
<dbReference type="Proteomes" id="UP000002163">
    <property type="component" value="Chromosome"/>
</dbReference>
<dbReference type="GO" id="GO:0005737">
    <property type="term" value="C:cytoplasm"/>
    <property type="evidence" value="ECO:0007669"/>
    <property type="project" value="TreeGrafter"/>
</dbReference>
<dbReference type="GO" id="GO:0005525">
    <property type="term" value="F:GTP binding"/>
    <property type="evidence" value="ECO:0007669"/>
    <property type="project" value="UniProtKB-KW"/>
</dbReference>
<dbReference type="GO" id="GO:0003934">
    <property type="term" value="F:GTP cyclohydrolase I activity"/>
    <property type="evidence" value="ECO:0007669"/>
    <property type="project" value="UniProtKB-UniRule"/>
</dbReference>
<dbReference type="GO" id="GO:0008270">
    <property type="term" value="F:zinc ion binding"/>
    <property type="evidence" value="ECO:0007669"/>
    <property type="project" value="UniProtKB-UniRule"/>
</dbReference>
<dbReference type="GO" id="GO:0006730">
    <property type="term" value="P:one-carbon metabolic process"/>
    <property type="evidence" value="ECO:0007669"/>
    <property type="project" value="UniProtKB-UniRule"/>
</dbReference>
<dbReference type="GO" id="GO:0006729">
    <property type="term" value="P:tetrahydrobiopterin biosynthetic process"/>
    <property type="evidence" value="ECO:0007669"/>
    <property type="project" value="TreeGrafter"/>
</dbReference>
<dbReference type="GO" id="GO:0046654">
    <property type="term" value="P:tetrahydrofolate biosynthetic process"/>
    <property type="evidence" value="ECO:0007669"/>
    <property type="project" value="UniProtKB-UniRule"/>
</dbReference>
<dbReference type="CDD" id="cd00642">
    <property type="entry name" value="GTP_cyclohydro1"/>
    <property type="match status" value="1"/>
</dbReference>
<dbReference type="FunFam" id="1.10.286.10:FF:000001">
    <property type="entry name" value="GTP cyclohydrolase 1"/>
    <property type="match status" value="1"/>
</dbReference>
<dbReference type="FunFam" id="3.30.1130.10:FF:000001">
    <property type="entry name" value="GTP cyclohydrolase 1"/>
    <property type="match status" value="1"/>
</dbReference>
<dbReference type="Gene3D" id="1.10.286.10">
    <property type="match status" value="1"/>
</dbReference>
<dbReference type="Gene3D" id="3.30.1130.10">
    <property type="match status" value="1"/>
</dbReference>
<dbReference type="HAMAP" id="MF_00223">
    <property type="entry name" value="FolE"/>
    <property type="match status" value="1"/>
</dbReference>
<dbReference type="InterPro" id="IPR043133">
    <property type="entry name" value="GTP-CH-I_C/QueF"/>
</dbReference>
<dbReference type="InterPro" id="IPR043134">
    <property type="entry name" value="GTP-CH-I_N"/>
</dbReference>
<dbReference type="InterPro" id="IPR001474">
    <property type="entry name" value="GTP_CycHdrlase_I"/>
</dbReference>
<dbReference type="InterPro" id="IPR018234">
    <property type="entry name" value="GTP_CycHdrlase_I_CS"/>
</dbReference>
<dbReference type="InterPro" id="IPR020602">
    <property type="entry name" value="GTP_CycHdrlase_I_dom"/>
</dbReference>
<dbReference type="NCBIfam" id="TIGR00063">
    <property type="entry name" value="folE"/>
    <property type="match status" value="1"/>
</dbReference>
<dbReference type="NCBIfam" id="NF006825">
    <property type="entry name" value="PRK09347.1-2"/>
    <property type="match status" value="1"/>
</dbReference>
<dbReference type="NCBIfam" id="NF006826">
    <property type="entry name" value="PRK09347.1-3"/>
    <property type="match status" value="1"/>
</dbReference>
<dbReference type="PANTHER" id="PTHR11109:SF7">
    <property type="entry name" value="GTP CYCLOHYDROLASE 1"/>
    <property type="match status" value="1"/>
</dbReference>
<dbReference type="PANTHER" id="PTHR11109">
    <property type="entry name" value="GTP CYCLOHYDROLASE I"/>
    <property type="match status" value="1"/>
</dbReference>
<dbReference type="Pfam" id="PF01227">
    <property type="entry name" value="GTP_cyclohydroI"/>
    <property type="match status" value="1"/>
</dbReference>
<dbReference type="SUPFAM" id="SSF55620">
    <property type="entry name" value="Tetrahydrobiopterin biosynthesis enzymes-like"/>
    <property type="match status" value="1"/>
</dbReference>
<dbReference type="PROSITE" id="PS00859">
    <property type="entry name" value="GTP_CYCLOHYDROL_1_1"/>
    <property type="match status" value="1"/>
</dbReference>
<dbReference type="PROSITE" id="PS00860">
    <property type="entry name" value="GTP_CYCLOHYDROL_1_2"/>
    <property type="match status" value="1"/>
</dbReference>
<protein>
    <recommendedName>
        <fullName evidence="1">GTP cyclohydrolase 1</fullName>
        <ecNumber evidence="1">3.5.4.16</ecNumber>
    </recommendedName>
    <alternativeName>
        <fullName evidence="1">GTP cyclohydrolase I</fullName>
        <shortName evidence="1">GTP-CH-I</shortName>
    </alternativeName>
</protein>
<reference key="1">
    <citation type="journal article" date="2010" name="Genome Biol.">
        <title>Structure and dynamics of the pan-genome of Streptococcus pneumoniae and closely related species.</title>
        <authorList>
            <person name="Donati C."/>
            <person name="Hiller N.L."/>
            <person name="Tettelin H."/>
            <person name="Muzzi A."/>
            <person name="Croucher N.J."/>
            <person name="Angiuoli S.V."/>
            <person name="Oggioni M."/>
            <person name="Dunning Hotopp J.C."/>
            <person name="Hu F.Z."/>
            <person name="Riley D.R."/>
            <person name="Covacci A."/>
            <person name="Mitchell T.J."/>
            <person name="Bentley S.D."/>
            <person name="Kilian M."/>
            <person name="Ehrlich G.D."/>
            <person name="Rappuoli R."/>
            <person name="Moxon E.R."/>
            <person name="Masignani V."/>
        </authorList>
    </citation>
    <scope>NUCLEOTIDE SEQUENCE [LARGE SCALE GENOMIC DNA]</scope>
    <source>
        <strain>Hungary19A-6</strain>
    </source>
</reference>
<accession>B1I918</accession>
<feature type="chain" id="PRO_1000100201" description="GTP cyclohydrolase 1">
    <location>
        <begin position="1"/>
        <end position="184"/>
    </location>
</feature>
<feature type="binding site" evidence="1">
    <location>
        <position position="75"/>
    </location>
    <ligand>
        <name>Zn(2+)</name>
        <dbReference type="ChEBI" id="CHEBI:29105"/>
    </ligand>
</feature>
<feature type="binding site" evidence="1">
    <location>
        <position position="78"/>
    </location>
    <ligand>
        <name>Zn(2+)</name>
        <dbReference type="ChEBI" id="CHEBI:29105"/>
    </ligand>
</feature>
<feature type="binding site" evidence="1">
    <location>
        <position position="146"/>
    </location>
    <ligand>
        <name>Zn(2+)</name>
        <dbReference type="ChEBI" id="CHEBI:29105"/>
    </ligand>
</feature>
<gene>
    <name evidence="1" type="primary">folE</name>
    <name type="ordered locus">SPH_0408</name>
</gene>
<sequence>MDTQKIEAAVKMIIEAVGENANREGLQETPARVARMYQEIFSGLGQTAEEHLSKSFEIIDDNMVVEKDIFFHTMCEHHFLPFYGRAHIAYIPDGRVAGLSKLARTVEVYSKKPQIQERLNIEVADALMDYLGAKGAFVVIEAEHMCMSMRGVRKPGTATLTTVARGLFETDKDLRDQAYRLMGL</sequence>
<name>GCH1_STRPI</name>
<comment type="catalytic activity">
    <reaction evidence="1">
        <text>GTP + H2O = 7,8-dihydroneopterin 3'-triphosphate + formate + H(+)</text>
        <dbReference type="Rhea" id="RHEA:17473"/>
        <dbReference type="ChEBI" id="CHEBI:15377"/>
        <dbReference type="ChEBI" id="CHEBI:15378"/>
        <dbReference type="ChEBI" id="CHEBI:15740"/>
        <dbReference type="ChEBI" id="CHEBI:37565"/>
        <dbReference type="ChEBI" id="CHEBI:58462"/>
        <dbReference type="EC" id="3.5.4.16"/>
    </reaction>
</comment>
<comment type="pathway">
    <text evidence="1">Cofactor biosynthesis; 7,8-dihydroneopterin triphosphate biosynthesis; 7,8-dihydroneopterin triphosphate from GTP: step 1/1.</text>
</comment>
<comment type="subunit">
    <text evidence="1">Homomer.</text>
</comment>
<comment type="similarity">
    <text evidence="1">Belongs to the GTP cyclohydrolase I family.</text>
</comment>
<evidence type="ECO:0000255" key="1">
    <source>
        <dbReference type="HAMAP-Rule" id="MF_00223"/>
    </source>
</evidence>
<keyword id="KW-0342">GTP-binding</keyword>
<keyword id="KW-0378">Hydrolase</keyword>
<keyword id="KW-0479">Metal-binding</keyword>
<keyword id="KW-0547">Nucleotide-binding</keyword>
<keyword id="KW-0554">One-carbon metabolism</keyword>
<keyword id="KW-0862">Zinc</keyword>
<organism>
    <name type="scientific">Streptococcus pneumoniae (strain Hungary19A-6)</name>
    <dbReference type="NCBI Taxonomy" id="487214"/>
    <lineage>
        <taxon>Bacteria</taxon>
        <taxon>Bacillati</taxon>
        <taxon>Bacillota</taxon>
        <taxon>Bacilli</taxon>
        <taxon>Lactobacillales</taxon>
        <taxon>Streptococcaceae</taxon>
        <taxon>Streptococcus</taxon>
    </lineage>
</organism>